<comment type="cofactor">
    <cofactor evidence="1">
        <name>[4Fe-4S] cluster</name>
        <dbReference type="ChEBI" id="CHEBI:49883"/>
    </cofactor>
    <text evidence="1">Binds 1 [4Fe-4S] cluster. The cluster is coordinated with 3 cysteines and an exchangeable S-adenosyl-L-methionine.</text>
</comment>
<comment type="similarity">
    <text evidence="1">Belongs to the UPF0313 family.</text>
</comment>
<protein>
    <recommendedName>
        <fullName evidence="1">UPF0313 protein YgiQ</fullName>
    </recommendedName>
</protein>
<dbReference type="EMBL" id="AE005174">
    <property type="protein sequence ID" value="AAG58152.1"/>
    <property type="molecule type" value="Genomic_DNA"/>
</dbReference>
<dbReference type="EMBL" id="BA000007">
    <property type="protein sequence ID" value="BAB37323.1"/>
    <property type="molecule type" value="Genomic_DNA"/>
</dbReference>
<dbReference type="PIR" id="D85961">
    <property type="entry name" value="D85961"/>
</dbReference>
<dbReference type="PIR" id="D91116">
    <property type="entry name" value="D91116"/>
</dbReference>
<dbReference type="RefSeq" id="NP_311927.1">
    <property type="nucleotide sequence ID" value="NC_002695.1"/>
</dbReference>
<dbReference type="RefSeq" id="WP_000095178.1">
    <property type="nucleotide sequence ID" value="NZ_VOAI01000009.1"/>
</dbReference>
<dbReference type="STRING" id="155864.Z4370"/>
<dbReference type="GeneID" id="916273"/>
<dbReference type="KEGG" id="ece:Z4370"/>
<dbReference type="KEGG" id="ecs:ECs_3900"/>
<dbReference type="PATRIC" id="fig|386585.9.peg.4068"/>
<dbReference type="eggNOG" id="COG1032">
    <property type="taxonomic scope" value="Bacteria"/>
</dbReference>
<dbReference type="HOGENOM" id="CLU_018288_2_0_6"/>
<dbReference type="OMA" id="DSMVNRY"/>
<dbReference type="Proteomes" id="UP000000558">
    <property type="component" value="Chromosome"/>
</dbReference>
<dbReference type="Proteomes" id="UP000002519">
    <property type="component" value="Chromosome"/>
</dbReference>
<dbReference type="GO" id="GO:0051539">
    <property type="term" value="F:4 iron, 4 sulfur cluster binding"/>
    <property type="evidence" value="ECO:0007669"/>
    <property type="project" value="UniProtKB-KW"/>
</dbReference>
<dbReference type="GO" id="GO:0003824">
    <property type="term" value="F:catalytic activity"/>
    <property type="evidence" value="ECO:0007669"/>
    <property type="project" value="InterPro"/>
</dbReference>
<dbReference type="GO" id="GO:0005506">
    <property type="term" value="F:iron ion binding"/>
    <property type="evidence" value="ECO:0007669"/>
    <property type="project" value="UniProtKB-UniRule"/>
</dbReference>
<dbReference type="Gene3D" id="3.80.30.20">
    <property type="entry name" value="tm_1862 like domain"/>
    <property type="match status" value="1"/>
</dbReference>
<dbReference type="HAMAP" id="MF_01251">
    <property type="entry name" value="UPF0313"/>
    <property type="match status" value="1"/>
</dbReference>
<dbReference type="InterPro" id="IPR006638">
    <property type="entry name" value="Elp3/MiaA/NifB-like_rSAM"/>
</dbReference>
<dbReference type="InterPro" id="IPR020612">
    <property type="entry name" value="Methylthiotransferase_CS"/>
</dbReference>
<dbReference type="InterPro" id="IPR007197">
    <property type="entry name" value="rSAM"/>
</dbReference>
<dbReference type="InterPro" id="IPR023404">
    <property type="entry name" value="rSAM_horseshoe"/>
</dbReference>
<dbReference type="InterPro" id="IPR022946">
    <property type="entry name" value="UPF0313"/>
</dbReference>
<dbReference type="InterPro" id="IPR024560">
    <property type="entry name" value="UPF0313_C"/>
</dbReference>
<dbReference type="InterPro" id="IPR013704">
    <property type="entry name" value="UPF0313_N"/>
</dbReference>
<dbReference type="NCBIfam" id="TIGR03904">
    <property type="entry name" value="SAM_YgiQ"/>
    <property type="match status" value="1"/>
</dbReference>
<dbReference type="PANTHER" id="PTHR32331">
    <property type="entry name" value="UPF0313 PROTEIN YGIQ"/>
    <property type="match status" value="1"/>
</dbReference>
<dbReference type="PANTHER" id="PTHR32331:SF0">
    <property type="entry name" value="UPF0313 PROTEIN YGIQ"/>
    <property type="match status" value="1"/>
</dbReference>
<dbReference type="Pfam" id="PF11842">
    <property type="entry name" value="DUF3362"/>
    <property type="match status" value="1"/>
</dbReference>
<dbReference type="Pfam" id="PF04055">
    <property type="entry name" value="Radical_SAM"/>
    <property type="match status" value="1"/>
</dbReference>
<dbReference type="Pfam" id="PF08497">
    <property type="entry name" value="Radical_SAM_N"/>
    <property type="match status" value="1"/>
</dbReference>
<dbReference type="SFLD" id="SFLDG01082">
    <property type="entry name" value="B12-binding_domain_containing"/>
    <property type="match status" value="1"/>
</dbReference>
<dbReference type="SFLD" id="SFLDS00029">
    <property type="entry name" value="Radical_SAM"/>
    <property type="match status" value="1"/>
</dbReference>
<dbReference type="SFLD" id="SFLDG01069">
    <property type="entry name" value="UPF0313"/>
    <property type="match status" value="1"/>
</dbReference>
<dbReference type="SMART" id="SM00729">
    <property type="entry name" value="Elp3"/>
    <property type="match status" value="1"/>
</dbReference>
<dbReference type="SUPFAM" id="SSF102114">
    <property type="entry name" value="Radical SAM enzymes"/>
    <property type="match status" value="1"/>
</dbReference>
<dbReference type="PROSITE" id="PS51918">
    <property type="entry name" value="RADICAL_SAM"/>
    <property type="match status" value="1"/>
</dbReference>
<feature type="chain" id="PRO_0000076385" description="UPF0313 protein YgiQ">
    <location>
        <begin position="1"/>
        <end position="739"/>
    </location>
</feature>
<feature type="domain" description="Radical SAM core" evidence="2">
    <location>
        <begin position="372"/>
        <end position="650"/>
    </location>
</feature>
<feature type="region of interest" description="Disordered" evidence="3">
    <location>
        <begin position="686"/>
        <end position="739"/>
    </location>
</feature>
<feature type="compositionally biased region" description="Polar residues" evidence="3">
    <location>
        <begin position="704"/>
        <end position="724"/>
    </location>
</feature>
<feature type="compositionally biased region" description="Basic residues" evidence="3">
    <location>
        <begin position="729"/>
        <end position="739"/>
    </location>
</feature>
<feature type="binding site" evidence="1">
    <location>
        <position position="386"/>
    </location>
    <ligand>
        <name>[4Fe-4S] cluster</name>
        <dbReference type="ChEBI" id="CHEBI:49883"/>
        <note>4Fe-4S-S-AdoMet</note>
    </ligand>
</feature>
<feature type="binding site" evidence="1">
    <location>
        <position position="390"/>
    </location>
    <ligand>
        <name>[4Fe-4S] cluster</name>
        <dbReference type="ChEBI" id="CHEBI:49883"/>
        <note>4Fe-4S-S-AdoMet</note>
    </ligand>
</feature>
<feature type="binding site" evidence="1">
    <location>
        <position position="393"/>
    </location>
    <ligand>
        <name>[4Fe-4S] cluster</name>
        <dbReference type="ChEBI" id="CHEBI:49883"/>
        <note>4Fe-4S-S-AdoMet</note>
    </ligand>
</feature>
<organism>
    <name type="scientific">Escherichia coli O157:H7</name>
    <dbReference type="NCBI Taxonomy" id="83334"/>
    <lineage>
        <taxon>Bacteria</taxon>
        <taxon>Pseudomonadati</taxon>
        <taxon>Pseudomonadota</taxon>
        <taxon>Gammaproteobacteria</taxon>
        <taxon>Enterobacterales</taxon>
        <taxon>Enterobacteriaceae</taxon>
        <taxon>Escherichia</taxon>
    </lineage>
</organism>
<evidence type="ECO:0000255" key="1">
    <source>
        <dbReference type="HAMAP-Rule" id="MF_01251"/>
    </source>
</evidence>
<evidence type="ECO:0000255" key="2">
    <source>
        <dbReference type="PROSITE-ProRule" id="PRU01266"/>
    </source>
</evidence>
<evidence type="ECO:0000256" key="3">
    <source>
        <dbReference type="SAM" id="MobiDB-lite"/>
    </source>
</evidence>
<keyword id="KW-0004">4Fe-4S</keyword>
<keyword id="KW-0408">Iron</keyword>
<keyword id="KW-0411">Iron-sulfur</keyword>
<keyword id="KW-0479">Metal-binding</keyword>
<keyword id="KW-1185">Reference proteome</keyword>
<keyword id="KW-0949">S-adenosyl-L-methionine</keyword>
<sequence length="739" mass="83425">MSSISLIQPDRDLFSWPQYWAACFGPAPFLPMSREEMDQLGWDSCDIILVTGDAYVDHPSFGMAICGRMLEAQGFRVGIIAQPDWSSKDDFMRLGKPNLFFGVTAGNMDSMINRYTADRRLRHDDAYTPDNVAGKRPDRATLVYTQRCKEAWKDVPVILGGIEASLRRTAHYDYWSDTVRRSVLVDSKADMLMFGNGERPLVEVAHRLAMGEPISEIRDVRNTAIIVKEALPGWSGVDSTRLDTPGKIDPIPHPYGEDLPCADNKPVAPKKQEAKAVTVQPPRPKPWEKTYVLLPSFEKVKGDKVLYAHASRILHHETNPGCARALMQKHGDRYVWINPPAIPLSTEEMDSVFALPYKRVPHPAYGNARIPAYEMIRFSVNIMRGCFGGCSFCSITEHEGRIIQSRSEDSIINEIEAIRDTVPGFTGVISDLGGPTANMYMLRCKSPRAEQTCRRLSCVYPDICPHMDTNHEPTINLYRRARDLKGIKKILIASGVRYDIAVEDPRYIKELATHHVGGYLKIAPEHTEEGPLSKMMKPGMGSYDRFKELFDTYSKQAGKEQYLIPYFISAHPGTRDEDMVNLALWLKKHRFRLDQVQNFYPSPLANSTTMYYTGKNPLAKIGYKSEDVFVPKGDKQRRLHKALLRYHDPANWPLIRQALEAMGKKHLIGSRRDCLVPAPTIEEMREARRQNRNTRPALTKHTPMATQCQTPATAKKASSTQSRPVNAGAKKRPKAAVGR</sequence>
<gene>
    <name evidence="1" type="primary">ygiQ</name>
    <name type="ordered locus">Z4370</name>
    <name type="ordered locus">ECs3900</name>
</gene>
<accession>Q8XBS7</accession>
<reference key="1">
    <citation type="journal article" date="2001" name="Nature">
        <title>Genome sequence of enterohaemorrhagic Escherichia coli O157:H7.</title>
        <authorList>
            <person name="Perna N.T."/>
            <person name="Plunkett G. III"/>
            <person name="Burland V."/>
            <person name="Mau B."/>
            <person name="Glasner J.D."/>
            <person name="Rose D.J."/>
            <person name="Mayhew G.F."/>
            <person name="Evans P.S."/>
            <person name="Gregor J."/>
            <person name="Kirkpatrick H.A."/>
            <person name="Posfai G."/>
            <person name="Hackett J."/>
            <person name="Klink S."/>
            <person name="Boutin A."/>
            <person name="Shao Y."/>
            <person name="Miller L."/>
            <person name="Grotbeck E.J."/>
            <person name="Davis N.W."/>
            <person name="Lim A."/>
            <person name="Dimalanta E.T."/>
            <person name="Potamousis K."/>
            <person name="Apodaca J."/>
            <person name="Anantharaman T.S."/>
            <person name="Lin J."/>
            <person name="Yen G."/>
            <person name="Schwartz D.C."/>
            <person name="Welch R.A."/>
            <person name="Blattner F.R."/>
        </authorList>
    </citation>
    <scope>NUCLEOTIDE SEQUENCE [LARGE SCALE GENOMIC DNA]</scope>
    <source>
        <strain>O157:H7 / EDL933 / ATCC 700927 / EHEC</strain>
    </source>
</reference>
<reference key="2">
    <citation type="journal article" date="2001" name="DNA Res.">
        <title>Complete genome sequence of enterohemorrhagic Escherichia coli O157:H7 and genomic comparison with a laboratory strain K-12.</title>
        <authorList>
            <person name="Hayashi T."/>
            <person name="Makino K."/>
            <person name="Ohnishi M."/>
            <person name="Kurokawa K."/>
            <person name="Ishii K."/>
            <person name="Yokoyama K."/>
            <person name="Han C.-G."/>
            <person name="Ohtsubo E."/>
            <person name="Nakayama K."/>
            <person name="Murata T."/>
            <person name="Tanaka M."/>
            <person name="Tobe T."/>
            <person name="Iida T."/>
            <person name="Takami H."/>
            <person name="Honda T."/>
            <person name="Sasakawa C."/>
            <person name="Ogasawara N."/>
            <person name="Yasunaga T."/>
            <person name="Kuhara S."/>
            <person name="Shiba T."/>
            <person name="Hattori M."/>
            <person name="Shinagawa H."/>
        </authorList>
    </citation>
    <scope>NUCLEOTIDE SEQUENCE [LARGE SCALE GENOMIC DNA]</scope>
    <source>
        <strain>O157:H7 / Sakai / RIMD 0509952 / EHEC</strain>
    </source>
</reference>
<name>YGIQ_ECO57</name>
<proteinExistence type="inferred from homology"/>